<evidence type="ECO:0000250" key="1"/>
<evidence type="ECO:0000255" key="2"/>
<evidence type="ECO:0000269" key="3">
    <source>
    </source>
</evidence>
<evidence type="ECO:0000305" key="4"/>
<comment type="function">
    <text evidence="1">Component of the cytochrome b6-f complex, which mediates electron transfer between photosystem II (PSII) and photosystem I (PSI), cyclic electron flow around PSI, and state transitions.</text>
</comment>
<comment type="subunit">
    <text evidence="1">The 4 large subunits of the cytochrome b6-f complex are cytochrome b6, subunit IV (17 kDa polypeptide, PetD), cytochrome f and the Rieske protein, while the 4 small subunits are PetG, PetL, PetM and PetN. The complex functions as a dimer (By similarity).</text>
</comment>
<comment type="subcellular location">
    <subcellularLocation>
        <location evidence="1">Plastid</location>
        <location evidence="1">Chloroplast thylakoid membrane</location>
        <topology evidence="1">Single-pass membrane protein</topology>
    </subcellularLocation>
</comment>
<comment type="RNA editing">
    <location>
        <position position="1" evidence="3"/>
    </location>
    <location>
        <position position="12" evidence="3"/>
    </location>
    <text>The initiator methionine is created by RNA editing.</text>
</comment>
<comment type="similarity">
    <text evidence="4">Belongs to the PetN family.</text>
</comment>
<feature type="chain" id="PRO_0000217096" description="Cytochrome b6-f complex subunit 8">
    <location>
        <begin position="1"/>
        <end position="29"/>
    </location>
</feature>
<feature type="transmembrane region" description="Helical" evidence="2">
    <location>
        <begin position="3"/>
        <end position="23"/>
    </location>
</feature>
<proteinExistence type="evidence at transcript level"/>
<name>PETN_ADICA</name>
<protein>
    <recommendedName>
        <fullName>Cytochrome b6-f complex subunit 8</fullName>
    </recommendedName>
    <alternativeName>
        <fullName>Cytochrome b6-f complex subunit PetN</fullName>
    </alternativeName>
    <alternativeName>
        <fullName>Cytochrome b6-f complex subunit VIII</fullName>
    </alternativeName>
</protein>
<accession>Q85FM5</accession>
<geneLocation type="chloroplast"/>
<dbReference type="EMBL" id="AY178864">
    <property type="protein sequence ID" value="AAP29386.2"/>
    <property type="molecule type" value="Genomic_DNA"/>
</dbReference>
<dbReference type="RefSeq" id="NP_848054.2">
    <property type="nucleotide sequence ID" value="NC_004766.1"/>
</dbReference>
<dbReference type="SMR" id="Q85FM5"/>
<dbReference type="GeneID" id="807365"/>
<dbReference type="GO" id="GO:0009535">
    <property type="term" value="C:chloroplast thylakoid membrane"/>
    <property type="evidence" value="ECO:0007669"/>
    <property type="project" value="UniProtKB-SubCell"/>
</dbReference>
<dbReference type="GO" id="GO:0009512">
    <property type="term" value="C:cytochrome b6f complex"/>
    <property type="evidence" value="ECO:0007669"/>
    <property type="project" value="InterPro"/>
</dbReference>
<dbReference type="GO" id="GO:0045158">
    <property type="term" value="F:electron transporter, transferring electrons within cytochrome b6/f complex of photosystem II activity"/>
    <property type="evidence" value="ECO:0007669"/>
    <property type="project" value="InterPro"/>
</dbReference>
<dbReference type="GO" id="GO:0017004">
    <property type="term" value="P:cytochrome complex assembly"/>
    <property type="evidence" value="ECO:0007669"/>
    <property type="project" value="UniProtKB-UniRule"/>
</dbReference>
<dbReference type="GO" id="GO:0015979">
    <property type="term" value="P:photosynthesis"/>
    <property type="evidence" value="ECO:0007669"/>
    <property type="project" value="UniProtKB-KW"/>
</dbReference>
<dbReference type="HAMAP" id="MF_00395">
    <property type="entry name" value="Cytb6_f_PetN"/>
    <property type="match status" value="1"/>
</dbReference>
<dbReference type="InterPro" id="IPR036143">
    <property type="entry name" value="Cytochr_b6-f_cplx_su8_sf"/>
</dbReference>
<dbReference type="InterPro" id="IPR005497">
    <property type="entry name" value="Cytochrome_b6-f_cplx_su8"/>
</dbReference>
<dbReference type="Pfam" id="PF03742">
    <property type="entry name" value="PetN"/>
    <property type="match status" value="1"/>
</dbReference>
<dbReference type="SUPFAM" id="SSF103451">
    <property type="entry name" value="PetN subunit of the cytochrome b6f complex"/>
    <property type="match status" value="1"/>
</dbReference>
<reference key="1">
    <citation type="journal article" date="2003" name="DNA Res.">
        <title>Complete nucleotide sequence of the chloroplast genome from a leptosporangiate fern, Adiantum capillus-veneris L.</title>
        <authorList>
            <person name="Wolf P.G."/>
            <person name="Rowe C.A."/>
            <person name="Sinclair R.B."/>
            <person name="Hasebe M."/>
        </authorList>
    </citation>
    <scope>NUCLEOTIDE SEQUENCE [LARGE SCALE GENOMIC DNA]</scope>
</reference>
<reference key="2">
    <citation type="journal article" date="2004" name="Gene">
        <title>High levels of RNA editing in a vascular plant chloroplast genome: analysis of transcripts from the fern Adiantum capillus-veneris.</title>
        <authorList>
            <person name="Wolf P.G."/>
            <person name="Rowe C.A."/>
            <person name="Hasebe M."/>
        </authorList>
    </citation>
    <scope>NUCLEOTIDE SEQUENCE [GENOMIC DNA]</scope>
    <scope>RNA EDITING</scope>
    <source>
        <tissue>Frond</tissue>
    </source>
</reference>
<organism>
    <name type="scientific">Adiantum capillus-veneris</name>
    <name type="common">Maidenhair fern</name>
    <dbReference type="NCBI Taxonomy" id="13818"/>
    <lineage>
        <taxon>Eukaryota</taxon>
        <taxon>Viridiplantae</taxon>
        <taxon>Streptophyta</taxon>
        <taxon>Embryophyta</taxon>
        <taxon>Tracheophyta</taxon>
        <taxon>Polypodiopsida</taxon>
        <taxon>Polypodiidae</taxon>
        <taxon>Polypodiales</taxon>
        <taxon>Pteridineae</taxon>
        <taxon>Pteridaceae</taxon>
        <taxon>Vittarioideae</taxon>
        <taxon>Adiantum</taxon>
    </lineage>
</organism>
<sequence>MDSVTIAWAALMAISTFSLSLVVRGRSGL</sequence>
<keyword id="KW-0150">Chloroplast</keyword>
<keyword id="KW-0249">Electron transport</keyword>
<keyword id="KW-0472">Membrane</keyword>
<keyword id="KW-0602">Photosynthesis</keyword>
<keyword id="KW-0934">Plastid</keyword>
<keyword id="KW-0691">RNA editing</keyword>
<keyword id="KW-0793">Thylakoid</keyword>
<keyword id="KW-0812">Transmembrane</keyword>
<keyword id="KW-1133">Transmembrane helix</keyword>
<keyword id="KW-0813">Transport</keyword>
<gene>
    <name type="primary">petN</name>
</gene>